<gene>
    <name evidence="1" type="primary">rplC</name>
    <name type="ordered locus">SPy_0049</name>
    <name type="ordered locus">M5005_Spy0044</name>
</gene>
<proteinExistence type="inferred from homology"/>
<organism>
    <name type="scientific">Streptococcus pyogenes serotype M1</name>
    <dbReference type="NCBI Taxonomy" id="301447"/>
    <lineage>
        <taxon>Bacteria</taxon>
        <taxon>Bacillati</taxon>
        <taxon>Bacillota</taxon>
        <taxon>Bacilli</taxon>
        <taxon>Lactobacillales</taxon>
        <taxon>Streptococcaceae</taxon>
        <taxon>Streptococcus</taxon>
    </lineage>
</organism>
<sequence length="208" mass="22438">MTKGILGKKVGMTQIFTESGEFIPVTVIEATPNVVLQVKTVETDGYEAVQVGFDDKREVLSNKPAKGHVAKANTAPKRFIREFKNIEGLEVGAELSVEQFEAGDVVDVTGISKGKGFQGVIKRHGQSRGPMAHGSRYHRRPGSMGPVAPNRVFKNKRLAGRMGGNRVTVQNLEIVQVIPEKNVILVKGNVPGAKKSLITIKSAVKAAK</sequence>
<keyword id="KW-1185">Reference proteome</keyword>
<keyword id="KW-0687">Ribonucleoprotein</keyword>
<keyword id="KW-0689">Ribosomal protein</keyword>
<keyword id="KW-0694">RNA-binding</keyword>
<keyword id="KW-0699">rRNA-binding</keyword>
<protein>
    <recommendedName>
        <fullName evidence="1">Large ribosomal subunit protein uL3</fullName>
    </recommendedName>
    <alternativeName>
        <fullName evidence="3">50S ribosomal protein L3</fullName>
    </alternativeName>
</protein>
<reference key="1">
    <citation type="journal article" date="2001" name="Proc. Natl. Acad. Sci. U.S.A.">
        <title>Complete genome sequence of an M1 strain of Streptococcus pyogenes.</title>
        <authorList>
            <person name="Ferretti J.J."/>
            <person name="McShan W.M."/>
            <person name="Ajdic D.J."/>
            <person name="Savic D.J."/>
            <person name="Savic G."/>
            <person name="Lyon K."/>
            <person name="Primeaux C."/>
            <person name="Sezate S."/>
            <person name="Suvorov A.N."/>
            <person name="Kenton S."/>
            <person name="Lai H.S."/>
            <person name="Lin S.P."/>
            <person name="Qian Y."/>
            <person name="Jia H.G."/>
            <person name="Najar F.Z."/>
            <person name="Ren Q."/>
            <person name="Zhu H."/>
            <person name="Song L."/>
            <person name="White J."/>
            <person name="Yuan X."/>
            <person name="Clifton S.W."/>
            <person name="Roe B.A."/>
            <person name="McLaughlin R.E."/>
        </authorList>
    </citation>
    <scope>NUCLEOTIDE SEQUENCE [LARGE SCALE GENOMIC DNA]</scope>
    <source>
        <strain>ATCC 700294 / SF370 / Serotype M1</strain>
    </source>
</reference>
<reference key="2">
    <citation type="journal article" date="2005" name="J. Infect. Dis.">
        <title>Evolutionary origin and emergence of a highly successful clone of serotype M1 group A Streptococcus involved multiple horizontal gene transfer events.</title>
        <authorList>
            <person name="Sumby P."/>
            <person name="Porcella S.F."/>
            <person name="Madrigal A.G."/>
            <person name="Barbian K.D."/>
            <person name="Virtaneva K."/>
            <person name="Ricklefs S.M."/>
            <person name="Sturdevant D.E."/>
            <person name="Graham M.R."/>
            <person name="Vuopio-Varkila J."/>
            <person name="Hoe N.P."/>
            <person name="Musser J.M."/>
        </authorList>
    </citation>
    <scope>NUCLEOTIDE SEQUENCE [LARGE SCALE GENOMIC DNA]</scope>
    <source>
        <strain>ATCC BAA-947 / MGAS5005 / Serotype M1</strain>
    </source>
</reference>
<comment type="function">
    <text evidence="1">One of the primary rRNA binding proteins, it binds directly near the 3'-end of the 23S rRNA, where it nucleates assembly of the 50S subunit.</text>
</comment>
<comment type="subunit">
    <text evidence="1">Part of the 50S ribosomal subunit. Forms a cluster with proteins L14 and L19.</text>
</comment>
<comment type="similarity">
    <text evidence="1">Belongs to the universal ribosomal protein uL3 family.</text>
</comment>
<feature type="chain" id="PRO_0000077170" description="Large ribosomal subunit protein uL3">
    <location>
        <begin position="1"/>
        <end position="208"/>
    </location>
</feature>
<feature type="region of interest" description="Disordered" evidence="2">
    <location>
        <begin position="122"/>
        <end position="148"/>
    </location>
</feature>
<feature type="sequence conflict" description="In Ref. 2; AAZ50663." evidence="3" ref="2">
    <original>I</original>
    <variation>T</variation>
    <location>
        <position position="111"/>
    </location>
</feature>
<accession>Q9A1X4</accession>
<accession>Q491Q5</accession>
<evidence type="ECO:0000255" key="1">
    <source>
        <dbReference type="HAMAP-Rule" id="MF_01325"/>
    </source>
</evidence>
<evidence type="ECO:0000256" key="2">
    <source>
        <dbReference type="SAM" id="MobiDB-lite"/>
    </source>
</evidence>
<evidence type="ECO:0000305" key="3"/>
<name>RL3_STRP1</name>
<dbReference type="EMBL" id="AE004092">
    <property type="protein sequence ID" value="AAK33182.1"/>
    <property type="molecule type" value="Genomic_DNA"/>
</dbReference>
<dbReference type="EMBL" id="CP000017">
    <property type="protein sequence ID" value="AAZ50663.1"/>
    <property type="molecule type" value="Genomic_DNA"/>
</dbReference>
<dbReference type="RefSeq" id="NP_268460.1">
    <property type="nucleotide sequence ID" value="NC_002737.2"/>
</dbReference>
<dbReference type="SMR" id="Q9A1X4"/>
<dbReference type="DrugBank" id="DB01256">
    <property type="generic name" value="Retapamulin"/>
</dbReference>
<dbReference type="DrugBank" id="DB06145">
    <property type="generic name" value="Spiramycin"/>
</dbReference>
<dbReference type="PaxDb" id="1314-HKU360_00077"/>
<dbReference type="KEGG" id="spy:SPy_0049"/>
<dbReference type="KEGG" id="spz:M5005_Spy0044"/>
<dbReference type="PATRIC" id="fig|160490.10.peg.44"/>
<dbReference type="HOGENOM" id="CLU_044142_4_1_9"/>
<dbReference type="OMA" id="GKNIPCT"/>
<dbReference type="PRO" id="PR:Q9A1X4"/>
<dbReference type="Proteomes" id="UP000000750">
    <property type="component" value="Chromosome"/>
</dbReference>
<dbReference type="GO" id="GO:0022625">
    <property type="term" value="C:cytosolic large ribosomal subunit"/>
    <property type="evidence" value="ECO:0007669"/>
    <property type="project" value="TreeGrafter"/>
</dbReference>
<dbReference type="GO" id="GO:0019843">
    <property type="term" value="F:rRNA binding"/>
    <property type="evidence" value="ECO:0007669"/>
    <property type="project" value="UniProtKB-UniRule"/>
</dbReference>
<dbReference type="GO" id="GO:0003735">
    <property type="term" value="F:structural constituent of ribosome"/>
    <property type="evidence" value="ECO:0007669"/>
    <property type="project" value="InterPro"/>
</dbReference>
<dbReference type="GO" id="GO:0006412">
    <property type="term" value="P:translation"/>
    <property type="evidence" value="ECO:0007669"/>
    <property type="project" value="UniProtKB-UniRule"/>
</dbReference>
<dbReference type="FunFam" id="2.40.30.10:FF:000004">
    <property type="entry name" value="50S ribosomal protein L3"/>
    <property type="match status" value="1"/>
</dbReference>
<dbReference type="FunFam" id="3.30.160.810:FF:000002">
    <property type="entry name" value="50S ribosomal protein L3"/>
    <property type="match status" value="1"/>
</dbReference>
<dbReference type="Gene3D" id="3.30.160.810">
    <property type="match status" value="1"/>
</dbReference>
<dbReference type="Gene3D" id="2.40.30.10">
    <property type="entry name" value="Translation factors"/>
    <property type="match status" value="1"/>
</dbReference>
<dbReference type="HAMAP" id="MF_01325_B">
    <property type="entry name" value="Ribosomal_uL3_B"/>
    <property type="match status" value="1"/>
</dbReference>
<dbReference type="InterPro" id="IPR000597">
    <property type="entry name" value="Ribosomal_uL3"/>
</dbReference>
<dbReference type="InterPro" id="IPR019927">
    <property type="entry name" value="Ribosomal_uL3_bac/org-type"/>
</dbReference>
<dbReference type="InterPro" id="IPR019926">
    <property type="entry name" value="Ribosomal_uL3_CS"/>
</dbReference>
<dbReference type="InterPro" id="IPR009000">
    <property type="entry name" value="Transl_B-barrel_sf"/>
</dbReference>
<dbReference type="NCBIfam" id="TIGR03625">
    <property type="entry name" value="L3_bact"/>
    <property type="match status" value="1"/>
</dbReference>
<dbReference type="PANTHER" id="PTHR11229">
    <property type="entry name" value="50S RIBOSOMAL PROTEIN L3"/>
    <property type="match status" value="1"/>
</dbReference>
<dbReference type="PANTHER" id="PTHR11229:SF16">
    <property type="entry name" value="LARGE RIBOSOMAL SUBUNIT PROTEIN UL3C"/>
    <property type="match status" value="1"/>
</dbReference>
<dbReference type="Pfam" id="PF00297">
    <property type="entry name" value="Ribosomal_L3"/>
    <property type="match status" value="1"/>
</dbReference>
<dbReference type="SUPFAM" id="SSF50447">
    <property type="entry name" value="Translation proteins"/>
    <property type="match status" value="1"/>
</dbReference>
<dbReference type="PROSITE" id="PS00474">
    <property type="entry name" value="RIBOSOMAL_L3"/>
    <property type="match status" value="1"/>
</dbReference>